<organism evidence="4 5">
    <name type="scientific">Streptococcus pneumoniae (strain ATCC BAA-255 / R6)</name>
    <dbReference type="NCBI Taxonomy" id="171101"/>
    <lineage>
        <taxon>Bacteria</taxon>
        <taxon>Bacillati</taxon>
        <taxon>Bacillota</taxon>
        <taxon>Bacilli</taxon>
        <taxon>Lactobacillales</taxon>
        <taxon>Streptococcaceae</taxon>
        <taxon>Streptococcus</taxon>
    </lineage>
</organism>
<accession>Q8DQ15</accession>
<feature type="chain" id="PRO_0000456761" description="Regulator of chromosome segregation">
    <location>
        <begin position="1"/>
        <end position="163"/>
    </location>
</feature>
<feature type="mutagenesis site" description="Nearly complete loss of DNA-binding." evidence="2">
    <original>G</original>
    <variation>P</variation>
    <location>
        <position position="15"/>
    </location>
</feature>
<protein>
    <recommendedName>
        <fullName evidence="3">Regulator of chromosome segregation</fullName>
    </recommendedName>
</protein>
<proteinExistence type="evidence at protein level"/>
<evidence type="ECO:0000250" key="1">
    <source>
        <dbReference type="UniProtKB" id="A0A0H2ZKY7"/>
    </source>
</evidence>
<evidence type="ECO:0000269" key="2">
    <source>
    </source>
</evidence>
<evidence type="ECO:0000303" key="3">
    <source>
    </source>
</evidence>
<evidence type="ECO:0000312" key="4">
    <source>
        <dbReference type="EMBL" id="AAK99699.1"/>
    </source>
</evidence>
<evidence type="ECO:0000312" key="5">
    <source>
        <dbReference type="Proteomes" id="UP000000586"/>
    </source>
</evidence>
<gene>
    <name evidence="3" type="primary">rocS</name>
    <name evidence="4" type="ordered locus">spr0895</name>
</gene>
<dbReference type="EMBL" id="AE007317">
    <property type="protein sequence ID" value="AAK99699.1"/>
    <property type="molecule type" value="Genomic_DNA"/>
</dbReference>
<dbReference type="PIR" id="F95114">
    <property type="entry name" value="F95114"/>
</dbReference>
<dbReference type="PIR" id="G97983">
    <property type="entry name" value="G97983"/>
</dbReference>
<dbReference type="RefSeq" id="NP_358489.1">
    <property type="nucleotide sequence ID" value="NC_003098.1"/>
</dbReference>
<dbReference type="RefSeq" id="WP_000021242.1">
    <property type="nucleotide sequence ID" value="NC_003098.1"/>
</dbReference>
<dbReference type="SMR" id="Q8DQ15"/>
<dbReference type="STRING" id="171101.spr0895"/>
<dbReference type="GeneID" id="93739471"/>
<dbReference type="KEGG" id="spr:spr0895"/>
<dbReference type="PATRIC" id="fig|171101.6.peg.982"/>
<dbReference type="eggNOG" id="ENOG5033BIW">
    <property type="taxonomic scope" value="Bacteria"/>
</dbReference>
<dbReference type="HOGENOM" id="CLU_1561956_0_0_9"/>
<dbReference type="Proteomes" id="UP000000586">
    <property type="component" value="Chromosome"/>
</dbReference>
<dbReference type="GO" id="GO:0032153">
    <property type="term" value="C:cell division site"/>
    <property type="evidence" value="ECO:0000314"/>
    <property type="project" value="UniProtKB"/>
</dbReference>
<dbReference type="GO" id="GO:0005737">
    <property type="term" value="C:cytoplasm"/>
    <property type="evidence" value="ECO:0007669"/>
    <property type="project" value="UniProtKB-KW"/>
</dbReference>
<dbReference type="GO" id="GO:0009295">
    <property type="term" value="C:nucleoid"/>
    <property type="evidence" value="ECO:0000314"/>
    <property type="project" value="UniProtKB"/>
</dbReference>
<dbReference type="GO" id="GO:0005886">
    <property type="term" value="C:plasma membrane"/>
    <property type="evidence" value="ECO:0000314"/>
    <property type="project" value="UniProtKB"/>
</dbReference>
<dbReference type="GO" id="GO:0003677">
    <property type="term" value="F:DNA binding"/>
    <property type="evidence" value="ECO:0000315"/>
    <property type="project" value="UniProtKB"/>
</dbReference>
<dbReference type="GO" id="GO:0051301">
    <property type="term" value="P:cell division"/>
    <property type="evidence" value="ECO:0000315"/>
    <property type="project" value="UniProtKB"/>
</dbReference>
<dbReference type="GO" id="GO:0007059">
    <property type="term" value="P:chromosome segregation"/>
    <property type="evidence" value="ECO:0007669"/>
    <property type="project" value="UniProtKB-KW"/>
</dbReference>
<dbReference type="GO" id="GO:0090143">
    <property type="term" value="P:nucleoid organization"/>
    <property type="evidence" value="ECO:0000315"/>
    <property type="project" value="UniProtKB"/>
</dbReference>
<dbReference type="GO" id="GO:0051984">
    <property type="term" value="P:positive regulation of chromosome segregation"/>
    <property type="evidence" value="ECO:0000315"/>
    <property type="project" value="UniProtKB"/>
</dbReference>
<dbReference type="InterPro" id="IPR007489">
    <property type="entry name" value="RocS-like_C"/>
</dbReference>
<dbReference type="Pfam" id="PF04394">
    <property type="entry name" value="DUF536"/>
    <property type="match status" value="1"/>
</dbReference>
<dbReference type="Pfam" id="PF13412">
    <property type="entry name" value="HTH_24"/>
    <property type="match status" value="1"/>
</dbReference>
<name>ROCS_STRR6</name>
<reference evidence="4 5" key="1">
    <citation type="journal article" date="2001" name="J. Bacteriol.">
        <title>Genome of the bacterium Streptococcus pneumoniae strain R6.</title>
        <authorList>
            <person name="Hoskins J."/>
            <person name="Alborn W.E. Jr."/>
            <person name="Arnold J."/>
            <person name="Blaszczak L.C."/>
            <person name="Burgett S."/>
            <person name="DeHoff B.S."/>
            <person name="Estrem S.T."/>
            <person name="Fritz L."/>
            <person name="Fu D.-J."/>
            <person name="Fuller W."/>
            <person name="Geringer C."/>
            <person name="Gilmour R."/>
            <person name="Glass J.S."/>
            <person name="Khoja H."/>
            <person name="Kraft A.R."/>
            <person name="Lagace R.E."/>
            <person name="LeBlanc D.J."/>
            <person name="Lee L.N."/>
            <person name="Lefkowitz E.J."/>
            <person name="Lu J."/>
            <person name="Matsushima P."/>
            <person name="McAhren S.M."/>
            <person name="McHenney M."/>
            <person name="McLeaster K."/>
            <person name="Mundy C.W."/>
            <person name="Nicas T.I."/>
            <person name="Norris F.H."/>
            <person name="O'Gara M."/>
            <person name="Peery R.B."/>
            <person name="Robertson G.T."/>
            <person name="Rockey P."/>
            <person name="Sun P.-M."/>
            <person name="Winkler M.E."/>
            <person name="Yang Y."/>
            <person name="Young-Bellido M."/>
            <person name="Zhao G."/>
            <person name="Zook C.A."/>
            <person name="Baltz R.H."/>
            <person name="Jaskunas S.R."/>
            <person name="Rosteck P.R. Jr."/>
            <person name="Skatrud P.L."/>
            <person name="Glass J.I."/>
        </authorList>
    </citation>
    <scope>NUCLEOTIDE SEQUENCE [LARGE SCALE GENOMIC DNA]</scope>
    <source>
        <strain evidence="5">ATCC BAA-255 / R6</strain>
    </source>
</reference>
<reference key="2">
    <citation type="journal article" date="2019" name="Nat. Microbiol.">
        <title>RocS drives chromosome segregation and nucleoid protection in Streptococcus pneumoniae.</title>
        <authorList>
            <person name="Mercy C."/>
            <person name="Ducret A."/>
            <person name="Slager J."/>
            <person name="Lavergne J.P."/>
            <person name="Freton C."/>
            <person name="Nagarajan S.N."/>
            <person name="Garcia P.S."/>
            <person name="Noirot-Gros M.F."/>
            <person name="Dubarry N."/>
            <person name="Nourikyan J."/>
            <person name="Veening J.W."/>
            <person name="Grangeasse C."/>
        </authorList>
    </citation>
    <scope>FUNCTION</scope>
    <scope>INTERACTION WITH FTSZ</scope>
    <scope>SUBCELLULAR LOCATION</scope>
    <scope>DOMAIN</scope>
    <scope>DISRUPTION PHENOTYPE</scope>
    <scope>MUTAGENESIS OF GLY-15</scope>
    <source>
        <strain evidence="3">R6 / R800</strain>
    </source>
</reference>
<sequence>MSIEMTVSEIAEVLGLSRQAINNRVKELPEEDTDKNDKGVTVVTRSGLIKLEEIYKKTIFEDEPVSEDVKQRELMEILVDEKNAEILRLYEQLKAKDRQLSEKDEQMRIKDRQIAEKDKQLDQQQQLTLQAMKDQENLKLELDQAKEEVQSTKKGFFARLFGG</sequence>
<comment type="function">
    <text evidence="2">Required for cell division and chromosome segregation. Binds to DNA and is involved in segregating the origin of replication (oriC) region to new daughter cells.</text>
</comment>
<comment type="subunit">
    <text evidence="1 2">Interacts with ParB (By similarity). Interacts with FtsZ in vitro (PubMed:31182798).</text>
</comment>
<comment type="subcellular location">
    <subcellularLocation>
        <location evidence="2">Cytoplasm</location>
        <location evidence="2">Nucleoid</location>
    </subcellularLocation>
    <subcellularLocation>
        <location evidence="2">Cell membrane</location>
        <topology evidence="2">Peripheral membrane protein</topology>
    </subcellularLocation>
    <text evidence="2">Localizes at mid-cell at first and then at the future site of division as the cell elongates. Forms one or two bright foci per cell mostly around mid-cell of small cells. Localizes toward the center of the daughter cell as the cell elongates. The bright foci mostly co-localize with origin of replication (oriC). During the cell cycle, very faint, but highly dynamic foci are homogeneously distributed all around the cell periphery.</text>
</comment>
<comment type="domain">
    <text evidence="2">The N-terminal DNA-binding helix-turn-helix (HTH) domain and the C-terminal membrane-binding amphipathic helix (AH) are both required for the function in chromosome segregation and for its proper subcellular location.</text>
</comment>
<comment type="disruption phenotype">
    <text evidence="2">Nucleoid defects. 15.7% of the cells are anucleate. Unaffected localization of the divisome. Chromosome-partitioning defects. Newly replicated chromosomes are not segregated (in 7% of the cells) or partially segregated and eventually truncated by the newly forming septum (in 21.8% of the cells). Segregation defects result in small cells, which constitute the majority of the anucleate cells (86.3%). No defects in chromosome replication. Chromosome-pinching takes place as nucleoid is asymmetrically distributed in elongated and constricting cells. Origin of replication (oriC) normally localizes as a single focus located around mid-cell of a nascent cell, but in cells lacking this gene, localization of oriC is strongly affected throughout the cell cycle and after duplication of the focus, most of the two foci remain near mid-cell and do not segregate to the daugher cells as in wild-type. The proportion of cells with only single foci is also significantly higher than in wild-type cells.</text>
</comment>
<keyword id="KW-0131">Cell cycle</keyword>
<keyword id="KW-0132">Cell division</keyword>
<keyword id="KW-1003">Cell membrane</keyword>
<keyword id="KW-0159">Chromosome partition</keyword>
<keyword id="KW-0963">Cytoplasm</keyword>
<keyword id="KW-0238">DNA-binding</keyword>
<keyword id="KW-0472">Membrane</keyword>
<keyword id="KW-1185">Reference proteome</keyword>